<keyword id="KW-0456">Lyase</keyword>
<keyword id="KW-0663">Pyridoxal phosphate</keyword>
<keyword id="KW-1185">Reference proteome</keyword>
<keyword id="KW-0808">Transferase</keyword>
<accession>D4GYV5</accession>
<accession>D2ECC4</accession>
<proteinExistence type="evidence at protein level"/>
<protein>
    <recommendedName>
        <fullName>Cysteine desulfurase</fullName>
        <ecNumber>2.8.1.7</ecNumber>
    </recommendedName>
    <alternativeName>
        <fullName>Selenocysteine lyase</fullName>
        <ecNumber>4.4.1.16</ecNumber>
    </alternativeName>
</protein>
<organism>
    <name type="scientific">Haloferax volcanii (strain ATCC 29605 / DSM 3757 / JCM 8879 / NBRC 14742 / NCIMB 2012 / VKM B-1768 / DS2)</name>
    <name type="common">Halobacterium volcanii</name>
    <dbReference type="NCBI Taxonomy" id="309800"/>
    <lineage>
        <taxon>Archaea</taxon>
        <taxon>Methanobacteriati</taxon>
        <taxon>Methanobacteriota</taxon>
        <taxon>Stenosarchaea group</taxon>
        <taxon>Halobacteria</taxon>
        <taxon>Halobacteriales</taxon>
        <taxon>Haloferacaceae</taxon>
        <taxon>Haloferax</taxon>
    </lineage>
</organism>
<name>SUFS_HALVD</name>
<gene>
    <name type="primary">sufS</name>
    <name type="ordered locus">HVO_0109</name>
    <name type="ORF">C498_18783</name>
</gene>
<evidence type="ECO:0000250" key="1"/>
<evidence type="ECO:0000269" key="2">
    <source>
    </source>
</evidence>
<evidence type="ECO:0000269" key="3">
    <source>
    </source>
</evidence>
<evidence type="ECO:0000305" key="4"/>
<feature type="chain" id="PRO_0000428944" description="Cysteine desulfurase">
    <location>
        <begin position="1"/>
        <end position="426"/>
    </location>
</feature>
<feature type="active site" description="Cysteine persulfide intermediate" evidence="1">
    <location>
        <position position="384"/>
    </location>
</feature>
<feature type="modified residue" description="N6-(pyridoxal phosphate)lysine" evidence="1">
    <location>
        <position position="245"/>
    </location>
</feature>
<reference key="1">
    <citation type="journal article" date="2010" name="Biochim. Biophys. Acta">
        <title>SufS protein from Haloferax volcanii involved in Fe-S cluster assembly in haloarchaea.</title>
        <authorList>
            <person name="Zafrilla B."/>
            <person name="Martinez-Espinosa R.M."/>
            <person name="Esclapez J."/>
            <person name="Perez-Pomares F."/>
            <person name="Bonete M.J."/>
        </authorList>
    </citation>
    <scope>NUCLEOTIDE SEQUENCE [GENOMIC DNA]</scope>
    <scope>FUNCTION</scope>
    <scope>CATALYTIC ACTIVITY</scope>
    <scope>COFACTOR</scope>
    <scope>SUBUNIT</scope>
    <scope>BIOPHYSICOCHEMICAL PROPERTIES</scope>
    <scope>ACTIVITY REGULATION</scope>
    <source>
        <strain>ATCC 29605 / DSM 3757 / JCM 8879 / NBRC 14742 / NCIMB 2012 / VKM B-1768 / DS2</strain>
    </source>
</reference>
<reference key="2">
    <citation type="journal article" date="2010" name="PLoS ONE">
        <title>The complete genome sequence of Haloferax volcanii DS2, a model archaeon.</title>
        <authorList>
            <person name="Hartman A.L."/>
            <person name="Norais C."/>
            <person name="Badger J.H."/>
            <person name="Delmas S."/>
            <person name="Haldenby S."/>
            <person name="Madupu R."/>
            <person name="Robinson J."/>
            <person name="Khouri H."/>
            <person name="Ren Q."/>
            <person name="Lowe T.M."/>
            <person name="Maupin-Furlow J."/>
            <person name="Pohlschroder M."/>
            <person name="Daniels C."/>
            <person name="Pfeiffer F."/>
            <person name="Allers T."/>
            <person name="Eisen J.A."/>
        </authorList>
    </citation>
    <scope>NUCLEOTIDE SEQUENCE [LARGE SCALE GENOMIC DNA]</scope>
    <source>
        <strain>ATCC 29605 / DSM 3757 / JCM 8879 / NBRC 14742 / NCIMB 2012 / VKM B-1768 / DS2</strain>
    </source>
</reference>
<reference key="3">
    <citation type="journal article" date="2014" name="PLoS Genet.">
        <title>Phylogenetically driven sequencing of extremely halophilic archaea reveals strategies for static and dynamic osmo-response.</title>
        <authorList>
            <person name="Becker E.A."/>
            <person name="Seitzer P.M."/>
            <person name="Tritt A."/>
            <person name="Larsen D."/>
            <person name="Krusor M."/>
            <person name="Yao A.I."/>
            <person name="Wu D."/>
            <person name="Madern D."/>
            <person name="Eisen J.A."/>
            <person name="Darling A.E."/>
            <person name="Facciotti M.T."/>
        </authorList>
    </citation>
    <scope>NUCLEOTIDE SEQUENCE [LARGE SCALE GENOMIC DNA]</scope>
    <source>
        <strain>ATCC 29605 / DSM 3757 / JCM 8879 / NBRC 14742 / NCIMB 2012 / VKM B-1768 / DS2</strain>
    </source>
</reference>
<reference key="4">
    <citation type="journal article" date="2020" name="Nat. Commun.">
        <title>The Archaeal Proteome Project advances knowledge about archaeal cell biology through comprehensive proteomics.</title>
        <authorList>
            <person name="Schulze S."/>
            <person name="Adams Z."/>
            <person name="Cerletti M."/>
            <person name="De Castro R."/>
            <person name="Ferreira-Cerca S."/>
            <person name="Fufezan C."/>
            <person name="Gimenez M.I."/>
            <person name="Hippler M."/>
            <person name="Jevtic Z."/>
            <person name="Knueppel R."/>
            <person name="Legerme G."/>
            <person name="Lenz C."/>
            <person name="Marchfelder A."/>
            <person name="Maupin-Furlow J."/>
            <person name="Paggi R.A."/>
            <person name="Pfeiffer F."/>
            <person name="Poetsch A."/>
            <person name="Urlaub H."/>
            <person name="Pohlschroder M."/>
        </authorList>
    </citation>
    <scope>SEQUENCE REVISION TO N-TERMINUS</scope>
    <scope>IDENTIFICATION BY MASS SPECTROMETRY</scope>
    <source>
        <strain>ATCC 29605 / DSM 3757 / JCM 8879 / NBRC 14742 / NCIMB 2012 / VKM B-1768 / DS2</strain>
    </source>
</reference>
<dbReference type="EC" id="2.8.1.7"/>
<dbReference type="EC" id="4.4.1.16"/>
<dbReference type="EMBL" id="FN598908">
    <property type="protein sequence ID" value="CBI67620.1"/>
    <property type="molecule type" value="Genomic_DNA"/>
</dbReference>
<dbReference type="EMBL" id="CP001956">
    <property type="protein sequence ID" value="ADE05148.2"/>
    <property type="molecule type" value="Genomic_DNA"/>
</dbReference>
<dbReference type="EMBL" id="AOHU01000105">
    <property type="protein sequence ID" value="ELY24323.1"/>
    <property type="status" value="ALT_INIT"/>
    <property type="molecule type" value="Genomic_DNA"/>
</dbReference>
<dbReference type="SMR" id="D4GYV5"/>
<dbReference type="STRING" id="309800.HVO_0109"/>
<dbReference type="PaxDb" id="309800-C498_18783"/>
<dbReference type="EnsemblBacteria" id="ADE05148">
    <property type="protein sequence ID" value="ADE05148"/>
    <property type="gene ID" value="HVO_0109"/>
</dbReference>
<dbReference type="KEGG" id="hvo:HVO_0109"/>
<dbReference type="PATRIC" id="fig|309800.29.peg.3658"/>
<dbReference type="eggNOG" id="arCOG00065">
    <property type="taxonomic scope" value="Archaea"/>
</dbReference>
<dbReference type="HOGENOM" id="CLU_003433_2_5_2"/>
<dbReference type="OrthoDB" id="5817at2157"/>
<dbReference type="BRENDA" id="2.8.1.7">
    <property type="organism ID" value="2561"/>
</dbReference>
<dbReference type="BRENDA" id="4.4.1.16">
    <property type="organism ID" value="2561"/>
</dbReference>
<dbReference type="UniPathway" id="UPA00266"/>
<dbReference type="Proteomes" id="UP000008243">
    <property type="component" value="Chromosome"/>
</dbReference>
<dbReference type="Proteomes" id="UP000011532">
    <property type="component" value="Unassembled WGS sequence"/>
</dbReference>
<dbReference type="GO" id="GO:0031071">
    <property type="term" value="F:cysteine desulfurase activity"/>
    <property type="evidence" value="ECO:0007669"/>
    <property type="project" value="UniProtKB-EC"/>
</dbReference>
<dbReference type="GO" id="GO:0030170">
    <property type="term" value="F:pyridoxal phosphate binding"/>
    <property type="evidence" value="ECO:0007669"/>
    <property type="project" value="InterPro"/>
</dbReference>
<dbReference type="GO" id="GO:0009000">
    <property type="term" value="F:selenocysteine lyase activity"/>
    <property type="evidence" value="ECO:0007669"/>
    <property type="project" value="UniProtKB-EC"/>
</dbReference>
<dbReference type="GO" id="GO:0006534">
    <property type="term" value="P:cysteine metabolic process"/>
    <property type="evidence" value="ECO:0007669"/>
    <property type="project" value="InterPro"/>
</dbReference>
<dbReference type="CDD" id="cd06453">
    <property type="entry name" value="SufS_like"/>
    <property type="match status" value="1"/>
</dbReference>
<dbReference type="Gene3D" id="3.90.1150.10">
    <property type="entry name" value="Aspartate Aminotransferase, domain 1"/>
    <property type="match status" value="1"/>
</dbReference>
<dbReference type="Gene3D" id="3.40.640.10">
    <property type="entry name" value="Type I PLP-dependent aspartate aminotransferase-like (Major domain)"/>
    <property type="match status" value="1"/>
</dbReference>
<dbReference type="InterPro" id="IPR000192">
    <property type="entry name" value="Aminotrans_V_dom"/>
</dbReference>
<dbReference type="InterPro" id="IPR010970">
    <property type="entry name" value="Cys_dSase_SufS"/>
</dbReference>
<dbReference type="InterPro" id="IPR016454">
    <property type="entry name" value="Cysteine_dSase"/>
</dbReference>
<dbReference type="InterPro" id="IPR015424">
    <property type="entry name" value="PyrdxlP-dep_Trfase"/>
</dbReference>
<dbReference type="InterPro" id="IPR015421">
    <property type="entry name" value="PyrdxlP-dep_Trfase_major"/>
</dbReference>
<dbReference type="InterPro" id="IPR015422">
    <property type="entry name" value="PyrdxlP-dep_Trfase_small"/>
</dbReference>
<dbReference type="NCBIfam" id="TIGR01979">
    <property type="entry name" value="sufS"/>
    <property type="match status" value="1"/>
</dbReference>
<dbReference type="PANTHER" id="PTHR43586">
    <property type="entry name" value="CYSTEINE DESULFURASE"/>
    <property type="match status" value="1"/>
</dbReference>
<dbReference type="PANTHER" id="PTHR43586:SF8">
    <property type="entry name" value="CYSTEINE DESULFURASE 1, CHLOROPLASTIC"/>
    <property type="match status" value="1"/>
</dbReference>
<dbReference type="Pfam" id="PF00266">
    <property type="entry name" value="Aminotran_5"/>
    <property type="match status" value="1"/>
</dbReference>
<dbReference type="PIRSF" id="PIRSF005572">
    <property type="entry name" value="NifS"/>
    <property type="match status" value="1"/>
</dbReference>
<dbReference type="SUPFAM" id="SSF53383">
    <property type="entry name" value="PLP-dependent transferases"/>
    <property type="match status" value="1"/>
</dbReference>
<comment type="function">
    <text evidence="2">Catalyzes the removal of elemental sulfur atoms from cysteine to produce alanine. Able to reassemble a removed [2Fe-2S] cluster of an apo-ferredoxin. Shows a selenocysteine lyase activity approximately 280-fold higher than its cysteine desulfurase activity.</text>
</comment>
<comment type="catalytic activity">
    <reaction evidence="2">
        <text>(sulfur carrier)-H + L-cysteine = (sulfur carrier)-SH + L-alanine</text>
        <dbReference type="Rhea" id="RHEA:43892"/>
        <dbReference type="Rhea" id="RHEA-COMP:14737"/>
        <dbReference type="Rhea" id="RHEA-COMP:14739"/>
        <dbReference type="ChEBI" id="CHEBI:29917"/>
        <dbReference type="ChEBI" id="CHEBI:35235"/>
        <dbReference type="ChEBI" id="CHEBI:57972"/>
        <dbReference type="ChEBI" id="CHEBI:64428"/>
        <dbReference type="EC" id="2.8.1.7"/>
    </reaction>
</comment>
<comment type="catalytic activity">
    <reaction evidence="2">
        <text>L-selenocysteine + AH2 = hydrogenselenide + L-alanine + A + H(+)</text>
        <dbReference type="Rhea" id="RHEA:11632"/>
        <dbReference type="ChEBI" id="CHEBI:13193"/>
        <dbReference type="ChEBI" id="CHEBI:15378"/>
        <dbReference type="ChEBI" id="CHEBI:17499"/>
        <dbReference type="ChEBI" id="CHEBI:29317"/>
        <dbReference type="ChEBI" id="CHEBI:57843"/>
        <dbReference type="ChEBI" id="CHEBI:57972"/>
        <dbReference type="EC" id="4.4.1.16"/>
    </reaction>
</comment>
<comment type="cofactor">
    <cofactor evidence="2">
        <name>pyridoxal 5'-phosphate</name>
        <dbReference type="ChEBI" id="CHEBI:597326"/>
    </cofactor>
</comment>
<comment type="activity regulation">
    <text evidence="2">DTT increases activity up to 46%, but has an inhibitory effect at concentrations higher than 5 mM in vitro.</text>
</comment>
<comment type="biophysicochemical properties">
    <kinetics>
        <KM evidence="2">0.032 mM for L-cysteine</KM>
        <KM evidence="2">0.97 mM for L-selenocysteine</KM>
        <Vmax evidence="2">0.051 umol/min/mg enzyme with L-cysteine as substrate</Vmax>
        <Vmax evidence="2">11.8 umol/min/mg enzyme with L-selenocysteine as substrate</Vmax>
    </kinetics>
    <phDependence>
        <text evidence="2">Optimum pH is 7.5. Remains partially active at pH 11.</text>
    </phDependence>
    <temperatureDependence>
        <text evidence="2">Optimum temperature is 55-60 degrees Celsius in the presence of 0-0.5 M KCl and 70-75 degrees Celsius in the presence of 2.5-3.0 M KCl.</text>
    </temperatureDependence>
</comment>
<comment type="pathway">
    <text>Cofactor biosynthesis; iron-sulfur cluster biosynthesis.</text>
</comment>
<comment type="subunit">
    <text evidence="2">Homodimer.</text>
</comment>
<comment type="similarity">
    <text evidence="4">Belongs to the class-V pyridoxal-phosphate-dependent aminotransferase family. Csd subfamily.</text>
</comment>
<comment type="sequence caution" evidence="3">
    <conflict type="erroneous initiation">
        <sequence resource="EMBL-CDS" id="ELY24323"/>
    </conflict>
    <text>Truncated N-terminus.</text>
</comment>
<sequence length="426" mass="46808">MRVQESYPVDVDAIRADFPILERKVGGDISTPGEHDDDTTPLVYLDNAATSHTPEQVVDAIVDYYHGYNSNVHRGIHHLSQEASVAYEDAHDRVAEFIGASGGREEVVFTKNTTESMNLVAYAWGLDELGPGDSVVMTEMEHHASLVTWQQIAKKTGAEVRYIRVDDDGRLDMEHAKELIDDSTKMVSVVHVSNTLGTVNPVSELADMAHEVGSYIFVDGAQSVPTRPVDVEDIDADFFAFSGHKMCGPTGIGALYGKRDILDEMGPYLYGGEMIRSVTYEDSTWEDLPWKFEAGTPPIAQGVGFAAAVDYLDDIGMENVQAHEELLAEYAYDRLTEFDDIEIYGPPGDDRGGLVSFNLDSVHAHDLSSILNEQGVAIRAGDHCTQPLHDKLGVAASTRASFYIYNAREEVDKLVDAIDAARELFA</sequence>